<feature type="chain" id="PRO_1000191572" description="Endonuclease V">
    <location>
        <begin position="1"/>
        <end position="223"/>
    </location>
</feature>
<feature type="binding site" evidence="1">
    <location>
        <position position="35"/>
    </location>
    <ligand>
        <name>Mg(2+)</name>
        <dbReference type="ChEBI" id="CHEBI:18420"/>
    </ligand>
</feature>
<feature type="binding site" evidence="1">
    <location>
        <position position="103"/>
    </location>
    <ligand>
        <name>Mg(2+)</name>
        <dbReference type="ChEBI" id="CHEBI:18420"/>
    </ligand>
</feature>
<feature type="site" description="Interaction with target DNA" evidence="1">
    <location>
        <position position="73"/>
    </location>
</feature>
<proteinExistence type="inferred from homology"/>
<comment type="function">
    <text evidence="1">DNA repair enzyme involved in the repair of deaminated bases. Selectively cleaves double-stranded DNA at the second phosphodiester bond 3' to a deoxyinosine leaving behind the intact lesion on the nicked DNA.</text>
</comment>
<comment type="catalytic activity">
    <reaction evidence="1">
        <text>Endonucleolytic cleavage at apurinic or apyrimidinic sites to products with a 5'-phosphate.</text>
        <dbReference type="EC" id="3.1.21.7"/>
    </reaction>
</comment>
<comment type="cofactor">
    <cofactor evidence="1">
        <name>Mg(2+)</name>
        <dbReference type="ChEBI" id="CHEBI:18420"/>
    </cofactor>
</comment>
<comment type="subcellular location">
    <subcellularLocation>
        <location evidence="1">Cytoplasm</location>
    </subcellularLocation>
</comment>
<comment type="similarity">
    <text evidence="1">Belongs to the endonuclease V family.</text>
</comment>
<evidence type="ECO:0000255" key="1">
    <source>
        <dbReference type="HAMAP-Rule" id="MF_00801"/>
    </source>
</evidence>
<dbReference type="EC" id="3.1.21.7" evidence="1"/>
<dbReference type="EMBL" id="AP009240">
    <property type="protein sequence ID" value="BAG79810.1"/>
    <property type="molecule type" value="Genomic_DNA"/>
</dbReference>
<dbReference type="RefSeq" id="WP_000362392.1">
    <property type="nucleotide sequence ID" value="NC_011415.1"/>
</dbReference>
<dbReference type="SMR" id="B6I5K9"/>
<dbReference type="GeneID" id="93777896"/>
<dbReference type="KEGG" id="ecy:ECSE_4286"/>
<dbReference type="HOGENOM" id="CLU_047631_1_0_6"/>
<dbReference type="Proteomes" id="UP000008199">
    <property type="component" value="Chromosome"/>
</dbReference>
<dbReference type="GO" id="GO:0005737">
    <property type="term" value="C:cytoplasm"/>
    <property type="evidence" value="ECO:0007669"/>
    <property type="project" value="UniProtKB-SubCell"/>
</dbReference>
<dbReference type="GO" id="GO:0043737">
    <property type="term" value="F:deoxyribonuclease V activity"/>
    <property type="evidence" value="ECO:0007669"/>
    <property type="project" value="UniProtKB-UniRule"/>
</dbReference>
<dbReference type="GO" id="GO:0000287">
    <property type="term" value="F:magnesium ion binding"/>
    <property type="evidence" value="ECO:0007669"/>
    <property type="project" value="UniProtKB-UniRule"/>
</dbReference>
<dbReference type="GO" id="GO:0016891">
    <property type="term" value="F:RNA endonuclease activity, producing 5'-phosphomonoesters"/>
    <property type="evidence" value="ECO:0007669"/>
    <property type="project" value="TreeGrafter"/>
</dbReference>
<dbReference type="GO" id="GO:0003727">
    <property type="term" value="F:single-stranded RNA binding"/>
    <property type="evidence" value="ECO:0007669"/>
    <property type="project" value="TreeGrafter"/>
</dbReference>
<dbReference type="GO" id="GO:0006281">
    <property type="term" value="P:DNA repair"/>
    <property type="evidence" value="ECO:0007669"/>
    <property type="project" value="UniProtKB-UniRule"/>
</dbReference>
<dbReference type="CDD" id="cd06559">
    <property type="entry name" value="Endonuclease_V"/>
    <property type="match status" value="1"/>
</dbReference>
<dbReference type="FunFam" id="3.30.2170.10:FF:000001">
    <property type="entry name" value="Endonuclease V"/>
    <property type="match status" value="1"/>
</dbReference>
<dbReference type="Gene3D" id="3.30.2170.10">
    <property type="entry name" value="archaeoglobus fulgidus dsm 4304 superfamily"/>
    <property type="match status" value="1"/>
</dbReference>
<dbReference type="HAMAP" id="MF_00801">
    <property type="entry name" value="Endonuclease_5"/>
    <property type="match status" value="1"/>
</dbReference>
<dbReference type="InterPro" id="IPR007581">
    <property type="entry name" value="Endonuclease-V"/>
</dbReference>
<dbReference type="NCBIfam" id="NF008629">
    <property type="entry name" value="PRK11617.1"/>
    <property type="match status" value="1"/>
</dbReference>
<dbReference type="PANTHER" id="PTHR28511">
    <property type="entry name" value="ENDONUCLEASE V"/>
    <property type="match status" value="1"/>
</dbReference>
<dbReference type="PANTHER" id="PTHR28511:SF1">
    <property type="entry name" value="ENDONUCLEASE V"/>
    <property type="match status" value="1"/>
</dbReference>
<dbReference type="Pfam" id="PF04493">
    <property type="entry name" value="Endonuclease_5"/>
    <property type="match status" value="1"/>
</dbReference>
<keyword id="KW-0963">Cytoplasm</keyword>
<keyword id="KW-0227">DNA damage</keyword>
<keyword id="KW-0234">DNA repair</keyword>
<keyword id="KW-0255">Endonuclease</keyword>
<keyword id="KW-0378">Hydrolase</keyword>
<keyword id="KW-0460">Magnesium</keyword>
<keyword id="KW-0479">Metal-binding</keyword>
<keyword id="KW-0540">Nuclease</keyword>
<reference key="1">
    <citation type="journal article" date="2008" name="DNA Res.">
        <title>Complete genome sequence and comparative analysis of the wild-type commensal Escherichia coli strain SE11 isolated from a healthy adult.</title>
        <authorList>
            <person name="Oshima K."/>
            <person name="Toh H."/>
            <person name="Ogura Y."/>
            <person name="Sasamoto H."/>
            <person name="Morita H."/>
            <person name="Park S.-H."/>
            <person name="Ooka T."/>
            <person name="Iyoda S."/>
            <person name="Taylor T.D."/>
            <person name="Hayashi T."/>
            <person name="Itoh K."/>
            <person name="Hattori M."/>
        </authorList>
    </citation>
    <scope>NUCLEOTIDE SEQUENCE [LARGE SCALE GENOMIC DNA]</scope>
    <source>
        <strain>SE11</strain>
    </source>
</reference>
<sequence>MDLASLRAQQIELASSVIREDRLDKDPPDLIAGADVGFEQGGEVTRAAMVLLKYPSLELVEYKVARIATTMPYIPGFLSFREYPALLAAWEMLSQKPDLVFVDGHGISHPRRLGVASHFGLMVDVPTIGVAKKRLCGKFEPLSSEPGALAPLMDKGEQLAWVWRSKARCNPLFIATGHRVSVDSALAWVQRCMKGYRLPEPTRWADAVASERPAFVRYTANQP</sequence>
<gene>
    <name evidence="1" type="primary">nfi</name>
    <name type="ordered locus">ECSE_4286</name>
</gene>
<name>NFI_ECOSE</name>
<accession>B6I5K9</accession>
<protein>
    <recommendedName>
        <fullName evidence="1">Endonuclease V</fullName>
        <ecNumber evidence="1">3.1.21.7</ecNumber>
    </recommendedName>
    <alternativeName>
        <fullName evidence="1">Deoxyinosine 3'endonuclease</fullName>
    </alternativeName>
    <alternativeName>
        <fullName evidence="1">Deoxyribonuclease V</fullName>
        <shortName evidence="1">DNase V</shortName>
    </alternativeName>
</protein>
<organism>
    <name type="scientific">Escherichia coli (strain SE11)</name>
    <dbReference type="NCBI Taxonomy" id="409438"/>
    <lineage>
        <taxon>Bacteria</taxon>
        <taxon>Pseudomonadati</taxon>
        <taxon>Pseudomonadota</taxon>
        <taxon>Gammaproteobacteria</taxon>
        <taxon>Enterobacterales</taxon>
        <taxon>Enterobacteriaceae</taxon>
        <taxon>Escherichia</taxon>
    </lineage>
</organism>